<name>MUG_SALTY</name>
<reference key="1">
    <citation type="journal article" date="2001" name="Nature">
        <title>Complete genome sequence of Salmonella enterica serovar Typhimurium LT2.</title>
        <authorList>
            <person name="McClelland M."/>
            <person name="Sanderson K.E."/>
            <person name="Spieth J."/>
            <person name="Clifton S.W."/>
            <person name="Latreille P."/>
            <person name="Courtney L."/>
            <person name="Porwollik S."/>
            <person name="Ali J."/>
            <person name="Dante M."/>
            <person name="Du F."/>
            <person name="Hou S."/>
            <person name="Layman D."/>
            <person name="Leonard S."/>
            <person name="Nguyen C."/>
            <person name="Scott K."/>
            <person name="Holmes A."/>
            <person name="Grewal N."/>
            <person name="Mulvaney E."/>
            <person name="Ryan E."/>
            <person name="Sun H."/>
            <person name="Florea L."/>
            <person name="Miller W."/>
            <person name="Stoneking T."/>
            <person name="Nhan M."/>
            <person name="Waterston R."/>
            <person name="Wilson R.K."/>
        </authorList>
    </citation>
    <scope>NUCLEOTIDE SEQUENCE [LARGE SCALE GENOMIC DNA]</scope>
    <source>
        <strain>LT2 / SGSC1412 / ATCC 700720</strain>
    </source>
</reference>
<comment type="function">
    <text evidence="1">Excises ethenocytosine and uracil, which can arise by alkylation or deamination of cytosine, respectively, from the corresponding mispairs with guanine in ds-DNA. It is capable of hydrolyzing the carbon-nitrogen bond between the sugar-phosphate backbone of the DNA and the mispaired base. The complementary strand guanine functions in substrate recognition. Required for DNA damage lesion repair in stationary-phase cells.</text>
</comment>
<comment type="catalytic activity">
    <reaction evidence="1">
        <text>Specifically hydrolyzes mismatched double-stranded DNA and polynucleotides, releasing free uracil.</text>
        <dbReference type="EC" id="3.2.2.28"/>
    </reaction>
</comment>
<comment type="subunit">
    <text evidence="1">Binds DNA as a monomer.</text>
</comment>
<comment type="subcellular location">
    <subcellularLocation>
        <location evidence="1">Cytoplasm</location>
    </subcellularLocation>
</comment>
<comment type="similarity">
    <text evidence="1">Belongs to the uracil-DNA glycosylase (UDG) superfamily. TDG/mug family.</text>
</comment>
<protein>
    <recommendedName>
        <fullName evidence="1">G/U mismatch-specific DNA glycosylase</fullName>
        <ecNumber evidence="1">3.2.2.28</ecNumber>
    </recommendedName>
    <alternativeName>
        <fullName evidence="1">Double-strand-specific uracil glycosylase</fullName>
    </alternativeName>
    <alternativeName>
        <fullName evidence="1">Mismatch-specific uracil DNA-glycosylase</fullName>
        <shortName evidence="1">MUG</shortName>
    </alternativeName>
</protein>
<accession>Q7CPR7</accession>
<proteinExistence type="inferred from homology"/>
<organism>
    <name type="scientific">Salmonella typhimurium (strain LT2 / SGSC1412 / ATCC 700720)</name>
    <dbReference type="NCBI Taxonomy" id="99287"/>
    <lineage>
        <taxon>Bacteria</taxon>
        <taxon>Pseudomonadati</taxon>
        <taxon>Pseudomonadota</taxon>
        <taxon>Gammaproteobacteria</taxon>
        <taxon>Enterobacterales</taxon>
        <taxon>Enterobacteriaceae</taxon>
        <taxon>Salmonella</taxon>
    </lineage>
</organism>
<sequence length="168" mass="18650">MVKDILAPGLRVVFCGINPGLSSANTGFPFAHPANRFWKVIHLAGFTDRQLKPEEAEKLLDFRCGVTKLVDRPTVQATEVKLHELRSGGRNLIEKIEDYQPAALAVLGKQAFEQGFSQRGIAWGKQKIAIGATMVWVLPNPSGLNRIKTEKLVEAYRELDQALIMRGL</sequence>
<gene>
    <name evidence="1" type="primary">mug</name>
    <name type="ordered locus">STM3212</name>
</gene>
<keyword id="KW-0963">Cytoplasm</keyword>
<keyword id="KW-0227">DNA damage</keyword>
<keyword id="KW-0228">DNA excision</keyword>
<keyword id="KW-0234">DNA repair</keyword>
<keyword id="KW-0238">DNA-binding</keyword>
<keyword id="KW-0378">Hydrolase</keyword>
<keyword id="KW-1185">Reference proteome</keyword>
<dbReference type="EC" id="3.2.2.28" evidence="1"/>
<dbReference type="EMBL" id="AE006468">
    <property type="protein sequence ID" value="AAL22086.1"/>
    <property type="molecule type" value="Genomic_DNA"/>
</dbReference>
<dbReference type="RefSeq" id="NP_462127.1">
    <property type="nucleotide sequence ID" value="NC_003197.2"/>
</dbReference>
<dbReference type="RefSeq" id="WP_000237776.1">
    <property type="nucleotide sequence ID" value="NC_003197.2"/>
</dbReference>
<dbReference type="SMR" id="Q7CPR7"/>
<dbReference type="STRING" id="99287.STM3212"/>
<dbReference type="PaxDb" id="99287-STM3212"/>
<dbReference type="GeneID" id="1254735"/>
<dbReference type="KEGG" id="stm:STM3212"/>
<dbReference type="PATRIC" id="fig|99287.12.peg.3408"/>
<dbReference type="HOGENOM" id="CLU_042829_3_1_6"/>
<dbReference type="OMA" id="FWPVLHL"/>
<dbReference type="PhylomeDB" id="Q7CPR7"/>
<dbReference type="BioCyc" id="SENT99287:STM3212-MONOMER"/>
<dbReference type="Proteomes" id="UP000001014">
    <property type="component" value="Chromosome"/>
</dbReference>
<dbReference type="GO" id="GO:0005737">
    <property type="term" value="C:cytoplasm"/>
    <property type="evidence" value="ECO:0007669"/>
    <property type="project" value="UniProtKB-SubCell"/>
</dbReference>
<dbReference type="GO" id="GO:0003677">
    <property type="term" value="F:DNA binding"/>
    <property type="evidence" value="ECO:0007669"/>
    <property type="project" value="UniProtKB-KW"/>
</dbReference>
<dbReference type="GO" id="GO:0008263">
    <property type="term" value="F:pyrimidine-specific mismatch base pair DNA N-glycosylase activity"/>
    <property type="evidence" value="ECO:0000318"/>
    <property type="project" value="GO_Central"/>
</dbReference>
<dbReference type="GO" id="GO:0004844">
    <property type="term" value="F:uracil DNA N-glycosylase activity"/>
    <property type="evidence" value="ECO:0000318"/>
    <property type="project" value="GO_Central"/>
</dbReference>
<dbReference type="GO" id="GO:0006285">
    <property type="term" value="P:base-excision repair, AP site formation"/>
    <property type="evidence" value="ECO:0000318"/>
    <property type="project" value="GO_Central"/>
</dbReference>
<dbReference type="CDD" id="cd10028">
    <property type="entry name" value="UDG-F2_TDG_MUG"/>
    <property type="match status" value="1"/>
</dbReference>
<dbReference type="Gene3D" id="3.40.470.10">
    <property type="entry name" value="Uracil-DNA glycosylase-like domain"/>
    <property type="match status" value="1"/>
</dbReference>
<dbReference type="HAMAP" id="MF_01956">
    <property type="entry name" value="MUG"/>
    <property type="match status" value="1"/>
</dbReference>
<dbReference type="InterPro" id="IPR015637">
    <property type="entry name" value="MUG/TDG"/>
</dbReference>
<dbReference type="InterPro" id="IPR023502">
    <property type="entry name" value="MUG_bact"/>
</dbReference>
<dbReference type="InterPro" id="IPR005122">
    <property type="entry name" value="Uracil-DNA_glycosylase-like"/>
</dbReference>
<dbReference type="InterPro" id="IPR036895">
    <property type="entry name" value="Uracil-DNA_glycosylase-like_sf"/>
</dbReference>
<dbReference type="NCBIfam" id="NF007570">
    <property type="entry name" value="PRK10201.1"/>
    <property type="match status" value="1"/>
</dbReference>
<dbReference type="PANTHER" id="PTHR12159">
    <property type="entry name" value="G/T AND G/U MISMATCH-SPECIFIC DNA GLYCOSYLASE"/>
    <property type="match status" value="1"/>
</dbReference>
<dbReference type="PANTHER" id="PTHR12159:SF9">
    <property type="entry name" value="G_T MISMATCH-SPECIFIC THYMINE DNA GLYCOSYLASE"/>
    <property type="match status" value="1"/>
</dbReference>
<dbReference type="Pfam" id="PF03167">
    <property type="entry name" value="UDG"/>
    <property type="match status" value="1"/>
</dbReference>
<dbReference type="SUPFAM" id="SSF52141">
    <property type="entry name" value="Uracil-DNA glycosylase-like"/>
    <property type="match status" value="1"/>
</dbReference>
<feature type="chain" id="PRO_0000238684" description="G/U mismatch-specific DNA glycosylase">
    <location>
        <begin position="1"/>
        <end position="168"/>
    </location>
</feature>
<evidence type="ECO:0000255" key="1">
    <source>
        <dbReference type="HAMAP-Rule" id="MF_01956"/>
    </source>
</evidence>